<sequence length="117" mass="13214">MTSSSTILQRLTQTIEARKSADPAHSYIAKLLSSNEDKVLKKIAEEAAETIMACKDNDREQIIYETADLWFHCLIMLARHDISPEAILSELERREGVSGIEEKLSRSQNQPEPTKAE</sequence>
<dbReference type="EC" id="3.6.1.31" evidence="1"/>
<dbReference type="EMBL" id="CP000450">
    <property type="protein sequence ID" value="ABI60143.1"/>
    <property type="molecule type" value="Genomic_DNA"/>
</dbReference>
<dbReference type="RefSeq" id="WP_011634945.1">
    <property type="nucleotide sequence ID" value="NC_008344.1"/>
</dbReference>
<dbReference type="SMR" id="Q0AET9"/>
<dbReference type="STRING" id="335283.Neut_1911"/>
<dbReference type="KEGG" id="net:Neut_1911"/>
<dbReference type="eggNOG" id="COG0140">
    <property type="taxonomic scope" value="Bacteria"/>
</dbReference>
<dbReference type="HOGENOM" id="CLU_123337_1_2_4"/>
<dbReference type="OrthoDB" id="9814738at2"/>
<dbReference type="UniPathway" id="UPA00031">
    <property type="reaction ID" value="UER00007"/>
</dbReference>
<dbReference type="Proteomes" id="UP000001966">
    <property type="component" value="Chromosome"/>
</dbReference>
<dbReference type="GO" id="GO:0005737">
    <property type="term" value="C:cytoplasm"/>
    <property type="evidence" value="ECO:0007669"/>
    <property type="project" value="UniProtKB-SubCell"/>
</dbReference>
<dbReference type="GO" id="GO:0005524">
    <property type="term" value="F:ATP binding"/>
    <property type="evidence" value="ECO:0007669"/>
    <property type="project" value="UniProtKB-KW"/>
</dbReference>
<dbReference type="GO" id="GO:0004636">
    <property type="term" value="F:phosphoribosyl-ATP diphosphatase activity"/>
    <property type="evidence" value="ECO:0007669"/>
    <property type="project" value="UniProtKB-UniRule"/>
</dbReference>
<dbReference type="GO" id="GO:0000105">
    <property type="term" value="P:L-histidine biosynthetic process"/>
    <property type="evidence" value="ECO:0007669"/>
    <property type="project" value="UniProtKB-UniRule"/>
</dbReference>
<dbReference type="CDD" id="cd11534">
    <property type="entry name" value="NTP-PPase_HisIE_like"/>
    <property type="match status" value="1"/>
</dbReference>
<dbReference type="Gene3D" id="1.10.287.1080">
    <property type="entry name" value="MazG-like"/>
    <property type="match status" value="1"/>
</dbReference>
<dbReference type="HAMAP" id="MF_01020">
    <property type="entry name" value="HisE"/>
    <property type="match status" value="1"/>
</dbReference>
<dbReference type="InterPro" id="IPR008179">
    <property type="entry name" value="HisE"/>
</dbReference>
<dbReference type="InterPro" id="IPR021130">
    <property type="entry name" value="PRib-ATP_PPHydrolase-like"/>
</dbReference>
<dbReference type="NCBIfam" id="TIGR03188">
    <property type="entry name" value="histidine_hisI"/>
    <property type="match status" value="1"/>
</dbReference>
<dbReference type="NCBIfam" id="NF001611">
    <property type="entry name" value="PRK00400.1-3"/>
    <property type="match status" value="1"/>
</dbReference>
<dbReference type="PANTHER" id="PTHR42945">
    <property type="entry name" value="HISTIDINE BIOSYNTHESIS BIFUNCTIONAL PROTEIN"/>
    <property type="match status" value="1"/>
</dbReference>
<dbReference type="PANTHER" id="PTHR42945:SF9">
    <property type="entry name" value="HISTIDINE BIOSYNTHESIS BIFUNCTIONAL PROTEIN HISIE"/>
    <property type="match status" value="1"/>
</dbReference>
<dbReference type="Pfam" id="PF01503">
    <property type="entry name" value="PRA-PH"/>
    <property type="match status" value="1"/>
</dbReference>
<dbReference type="SUPFAM" id="SSF101386">
    <property type="entry name" value="all-alpha NTP pyrophosphatases"/>
    <property type="match status" value="1"/>
</dbReference>
<protein>
    <recommendedName>
        <fullName evidence="1">Phosphoribosyl-ATP pyrophosphatase</fullName>
        <shortName evidence="1">PRA-PH</shortName>
        <ecNumber evidence="1">3.6.1.31</ecNumber>
    </recommendedName>
</protein>
<keyword id="KW-0028">Amino-acid biosynthesis</keyword>
<keyword id="KW-0067">ATP-binding</keyword>
<keyword id="KW-0963">Cytoplasm</keyword>
<keyword id="KW-0368">Histidine biosynthesis</keyword>
<keyword id="KW-0378">Hydrolase</keyword>
<keyword id="KW-0547">Nucleotide-binding</keyword>
<reference key="1">
    <citation type="journal article" date="2007" name="Environ. Microbiol.">
        <title>Whole-genome analysis of the ammonia-oxidizing bacterium, Nitrosomonas eutropha C91: implications for niche adaptation.</title>
        <authorList>
            <person name="Stein L.Y."/>
            <person name="Arp D.J."/>
            <person name="Berube P.M."/>
            <person name="Chain P.S."/>
            <person name="Hauser L."/>
            <person name="Jetten M.S."/>
            <person name="Klotz M.G."/>
            <person name="Larimer F.W."/>
            <person name="Norton J.M."/>
            <person name="Op den Camp H.J.M."/>
            <person name="Shin M."/>
            <person name="Wei X."/>
        </authorList>
    </citation>
    <scope>NUCLEOTIDE SEQUENCE [LARGE SCALE GENOMIC DNA]</scope>
    <source>
        <strain>DSM 101675 / C91 / Nm57</strain>
    </source>
</reference>
<comment type="catalytic activity">
    <reaction evidence="1">
        <text>1-(5-phospho-beta-D-ribosyl)-ATP + H2O = 1-(5-phospho-beta-D-ribosyl)-5'-AMP + diphosphate + H(+)</text>
        <dbReference type="Rhea" id="RHEA:22828"/>
        <dbReference type="ChEBI" id="CHEBI:15377"/>
        <dbReference type="ChEBI" id="CHEBI:15378"/>
        <dbReference type="ChEBI" id="CHEBI:33019"/>
        <dbReference type="ChEBI" id="CHEBI:59457"/>
        <dbReference type="ChEBI" id="CHEBI:73183"/>
        <dbReference type="EC" id="3.6.1.31"/>
    </reaction>
</comment>
<comment type="pathway">
    <text evidence="1">Amino-acid biosynthesis; L-histidine biosynthesis; L-histidine from 5-phospho-alpha-D-ribose 1-diphosphate: step 2/9.</text>
</comment>
<comment type="subcellular location">
    <subcellularLocation>
        <location evidence="1">Cytoplasm</location>
    </subcellularLocation>
</comment>
<comment type="similarity">
    <text evidence="1">Belongs to the PRA-PH family.</text>
</comment>
<feature type="chain" id="PRO_0000319654" description="Phosphoribosyl-ATP pyrophosphatase">
    <location>
        <begin position="1"/>
        <end position="117"/>
    </location>
</feature>
<feature type="region of interest" description="Disordered" evidence="2">
    <location>
        <begin position="96"/>
        <end position="117"/>
    </location>
</feature>
<feature type="compositionally biased region" description="Basic and acidic residues" evidence="2">
    <location>
        <begin position="96"/>
        <end position="105"/>
    </location>
</feature>
<feature type="compositionally biased region" description="Polar residues" evidence="2">
    <location>
        <begin position="106"/>
        <end position="117"/>
    </location>
</feature>
<organism>
    <name type="scientific">Nitrosomonas eutropha (strain DSM 101675 / C91 / Nm57)</name>
    <dbReference type="NCBI Taxonomy" id="335283"/>
    <lineage>
        <taxon>Bacteria</taxon>
        <taxon>Pseudomonadati</taxon>
        <taxon>Pseudomonadota</taxon>
        <taxon>Betaproteobacteria</taxon>
        <taxon>Nitrosomonadales</taxon>
        <taxon>Nitrosomonadaceae</taxon>
        <taxon>Nitrosomonas</taxon>
    </lineage>
</organism>
<proteinExistence type="inferred from homology"/>
<evidence type="ECO:0000255" key="1">
    <source>
        <dbReference type="HAMAP-Rule" id="MF_01020"/>
    </source>
</evidence>
<evidence type="ECO:0000256" key="2">
    <source>
        <dbReference type="SAM" id="MobiDB-lite"/>
    </source>
</evidence>
<gene>
    <name evidence="1" type="primary">hisE</name>
    <name type="ordered locus">Neut_1911</name>
</gene>
<accession>Q0AET9</accession>
<name>HIS2_NITEC</name>